<organism>
    <name type="scientific">Arabidopsis thaliana</name>
    <name type="common">Mouse-ear cress</name>
    <dbReference type="NCBI Taxonomy" id="3702"/>
    <lineage>
        <taxon>Eukaryota</taxon>
        <taxon>Viridiplantae</taxon>
        <taxon>Streptophyta</taxon>
        <taxon>Embryophyta</taxon>
        <taxon>Tracheophyta</taxon>
        <taxon>Spermatophyta</taxon>
        <taxon>Magnoliopsida</taxon>
        <taxon>eudicotyledons</taxon>
        <taxon>Gunneridae</taxon>
        <taxon>Pentapetalae</taxon>
        <taxon>rosids</taxon>
        <taxon>malvids</taxon>
        <taxon>Brassicales</taxon>
        <taxon>Brassicaceae</taxon>
        <taxon>Camelineae</taxon>
        <taxon>Arabidopsis</taxon>
    </lineage>
</organism>
<sequence>MGCLCINLKKKVKKPTPDISGEQNTEVKSREITPKEQPRQRQPAPRAKFQIVVQPHKLPLPLPQPQEKQKLINHQKQSTLQQPEPILGRPFEDIKEKYSLGRELGRGQFGITYICTEISSGKNFACKSILKRKLIRTKDREDVRREIQIMHYLSGQPNIVEIKGAYEDRQSVHLVMELCEGGELFDKITKRGHYSEKAAAEIIRSVVKVVQICHFMGVIHRDLKPENFLLSSKDEASSMLKATDFGVSVFIEEGKVYEDIVGSAYYVAPEVLKRNYGKAIDIWSAGVILYILLCGNPPFWAETDKGIFEEILRGEIDFESEPWPSISESAKDLVRNMLKYDPKKRFTAAQVLEHPWIREGGEASDKPIDSAVLSRMKQLRAMNKLKKLAFKFIAQNLKEEELKGLKTMFANMDTDKSGTITYDELKSGLEKLGSRLTETEVKQLLEDADVDGNGTIDYIEFISATMNRFRVEREDNLFKAFQHFDKDNSGFISRQELETAMKEYNMGDDIMIKEIISEVDADNDGSINYQEFCNMMKSCSQSHQSKLVQPN</sequence>
<accession>Q1PFH8</accession>
<accession>O80700</accession>
<reference key="1">
    <citation type="journal article" date="2000" name="Nature">
        <title>Sequence and analysis of chromosome 1 of the plant Arabidopsis thaliana.</title>
        <authorList>
            <person name="Theologis A."/>
            <person name="Ecker J.R."/>
            <person name="Palm C.J."/>
            <person name="Federspiel N.A."/>
            <person name="Kaul S."/>
            <person name="White O."/>
            <person name="Alonso J."/>
            <person name="Altafi H."/>
            <person name="Araujo R."/>
            <person name="Bowman C.L."/>
            <person name="Brooks S.Y."/>
            <person name="Buehler E."/>
            <person name="Chan A."/>
            <person name="Chao Q."/>
            <person name="Chen H."/>
            <person name="Cheuk R.F."/>
            <person name="Chin C.W."/>
            <person name="Chung M.K."/>
            <person name="Conn L."/>
            <person name="Conway A.B."/>
            <person name="Conway A.R."/>
            <person name="Creasy T.H."/>
            <person name="Dewar K."/>
            <person name="Dunn P."/>
            <person name="Etgu P."/>
            <person name="Feldblyum T.V."/>
            <person name="Feng J.-D."/>
            <person name="Fong B."/>
            <person name="Fujii C.Y."/>
            <person name="Gill J.E."/>
            <person name="Goldsmith A.D."/>
            <person name="Haas B."/>
            <person name="Hansen N.F."/>
            <person name="Hughes B."/>
            <person name="Huizar L."/>
            <person name="Hunter J.L."/>
            <person name="Jenkins J."/>
            <person name="Johnson-Hopson C."/>
            <person name="Khan S."/>
            <person name="Khaykin E."/>
            <person name="Kim C.J."/>
            <person name="Koo H.L."/>
            <person name="Kremenetskaia I."/>
            <person name="Kurtz D.B."/>
            <person name="Kwan A."/>
            <person name="Lam B."/>
            <person name="Langin-Hooper S."/>
            <person name="Lee A."/>
            <person name="Lee J.M."/>
            <person name="Lenz C.A."/>
            <person name="Li J.H."/>
            <person name="Li Y.-P."/>
            <person name="Lin X."/>
            <person name="Liu S.X."/>
            <person name="Liu Z.A."/>
            <person name="Luros J.S."/>
            <person name="Maiti R."/>
            <person name="Marziali A."/>
            <person name="Militscher J."/>
            <person name="Miranda M."/>
            <person name="Nguyen M."/>
            <person name="Nierman W.C."/>
            <person name="Osborne B.I."/>
            <person name="Pai G."/>
            <person name="Peterson J."/>
            <person name="Pham P.K."/>
            <person name="Rizzo M."/>
            <person name="Rooney T."/>
            <person name="Rowley D."/>
            <person name="Sakano H."/>
            <person name="Salzberg S.L."/>
            <person name="Schwartz J.R."/>
            <person name="Shinn P."/>
            <person name="Southwick A.M."/>
            <person name="Sun H."/>
            <person name="Tallon L.J."/>
            <person name="Tambunga G."/>
            <person name="Toriumi M.J."/>
            <person name="Town C.D."/>
            <person name="Utterback T."/>
            <person name="Van Aken S."/>
            <person name="Vaysberg M."/>
            <person name="Vysotskaia V.S."/>
            <person name="Walker M."/>
            <person name="Wu D."/>
            <person name="Yu G."/>
            <person name="Fraser C.M."/>
            <person name="Venter J.C."/>
            <person name="Davis R.W."/>
        </authorList>
    </citation>
    <scope>NUCLEOTIDE SEQUENCE [LARGE SCALE GENOMIC DNA]</scope>
    <source>
        <strain>cv. Columbia</strain>
    </source>
</reference>
<reference key="2">
    <citation type="journal article" date="2017" name="Plant J.">
        <title>Araport11: a complete reannotation of the Arabidopsis thaliana reference genome.</title>
        <authorList>
            <person name="Cheng C.Y."/>
            <person name="Krishnakumar V."/>
            <person name="Chan A.P."/>
            <person name="Thibaud-Nissen F."/>
            <person name="Schobel S."/>
            <person name="Town C.D."/>
        </authorList>
    </citation>
    <scope>GENOME REANNOTATION</scope>
    <source>
        <strain>cv. Columbia</strain>
    </source>
</reference>
<reference key="3">
    <citation type="journal article" date="2006" name="Plant Biotechnol. J.">
        <title>Simultaneous high-throughput recombinational cloning of open reading frames in closed and open configurations.</title>
        <authorList>
            <person name="Underwood B.A."/>
            <person name="Vanderhaeghen R."/>
            <person name="Whitford R."/>
            <person name="Town C.D."/>
            <person name="Hilson P."/>
        </authorList>
    </citation>
    <scope>NUCLEOTIDE SEQUENCE [LARGE SCALE MRNA]</scope>
    <source>
        <strain>cv. Columbia</strain>
    </source>
</reference>
<reference key="4">
    <citation type="journal article" date="2001" name="New Phytol.">
        <title>The CDPK superfamily of protein kinases.</title>
        <authorList>
            <person name="Harmon A.C."/>
            <person name="Gribskov M."/>
            <person name="Gubrium E."/>
            <person name="Harper J.F."/>
        </authorList>
    </citation>
    <scope>GENE FAMILY</scope>
    <scope>NOMENCLATURE</scope>
</reference>
<reference key="5">
    <citation type="journal article" date="2002" name="Plant Physiol.">
        <title>Calcium signaling through protein kinases. The Arabidopsis calcium-dependent protein kinase gene family.</title>
        <authorList>
            <person name="Cheng S.-H."/>
            <person name="Willmann M.R."/>
            <person name="Chen H.-C."/>
            <person name="Sheen J."/>
        </authorList>
    </citation>
    <scope>GENE FAMILY</scope>
    <scope>NOMENCLATURE</scope>
</reference>
<reference key="6">
    <citation type="journal article" date="2003" name="Plant Physiol.">
        <title>The Arabidopsis CDPK-SnRK superfamily of protein kinases.</title>
        <authorList>
            <person name="Hrabak E.M."/>
            <person name="Chan C.W.M."/>
            <person name="Gribskov M."/>
            <person name="Harper J.F."/>
            <person name="Choi J.H."/>
            <person name="Halford N."/>
            <person name="Kudla J."/>
            <person name="Luan S."/>
            <person name="Nimmo H.G."/>
            <person name="Sussman M.R."/>
            <person name="Thomas M."/>
            <person name="Walker-Simmons K."/>
            <person name="Zhu J.-K."/>
            <person name="Harmon A.C."/>
        </authorList>
    </citation>
    <scope>GENE FAMILY</scope>
    <scope>NOMENCLATURE</scope>
</reference>
<comment type="function">
    <text>May play a role in signal transduction pathways that involve calcium as a second messenger.</text>
</comment>
<comment type="catalytic activity">
    <reaction>
        <text>L-seryl-[protein] + ATP = O-phospho-L-seryl-[protein] + ADP + H(+)</text>
        <dbReference type="Rhea" id="RHEA:17989"/>
        <dbReference type="Rhea" id="RHEA-COMP:9863"/>
        <dbReference type="Rhea" id="RHEA-COMP:11604"/>
        <dbReference type="ChEBI" id="CHEBI:15378"/>
        <dbReference type="ChEBI" id="CHEBI:29999"/>
        <dbReference type="ChEBI" id="CHEBI:30616"/>
        <dbReference type="ChEBI" id="CHEBI:83421"/>
        <dbReference type="ChEBI" id="CHEBI:456216"/>
        <dbReference type="EC" id="2.7.11.1"/>
    </reaction>
</comment>
<comment type="catalytic activity">
    <reaction>
        <text>L-threonyl-[protein] + ATP = O-phospho-L-threonyl-[protein] + ADP + H(+)</text>
        <dbReference type="Rhea" id="RHEA:46608"/>
        <dbReference type="Rhea" id="RHEA-COMP:11060"/>
        <dbReference type="Rhea" id="RHEA-COMP:11605"/>
        <dbReference type="ChEBI" id="CHEBI:15378"/>
        <dbReference type="ChEBI" id="CHEBI:30013"/>
        <dbReference type="ChEBI" id="CHEBI:30616"/>
        <dbReference type="ChEBI" id="CHEBI:61977"/>
        <dbReference type="ChEBI" id="CHEBI:456216"/>
        <dbReference type="EC" id="2.7.11.1"/>
    </reaction>
</comment>
<comment type="activity regulation">
    <text evidence="1">Activated by calcium. Autophosphorylation may play an important role in the regulation of the kinase activity (By similarity).</text>
</comment>
<comment type="subcellular location">
    <subcellularLocation>
        <location evidence="8">Membrane</location>
        <topology evidence="8">Lipid-anchor</topology>
    </subcellularLocation>
</comment>
<comment type="domain">
    <text evidence="1">There are 3 contiguous domains conserved in the CDPK subfamily: a kinase domain, an autoinhibitory (junction) domain and a calmodulin-like domain. The autoinhibitory domain (363-393) inactivates kinase activity under calcium-free conditions (By similarity).</text>
</comment>
<comment type="similarity">
    <text evidence="4">Belongs to the protein kinase superfamily. Ser/Thr protein kinase family. CDPK subfamily.</text>
</comment>
<comment type="sequence caution" evidence="8">
    <conflict type="erroneous gene model prediction">
        <sequence resource="EMBL-CDS" id="AAC28510"/>
    </conflict>
</comment>
<gene>
    <name type="primary">CPK19</name>
    <name type="ordered locus">At1g61950</name>
    <name type="ORF">F8K4.14</name>
</gene>
<name>CDPKJ_ARATH</name>
<dbReference type="EC" id="2.7.11.1"/>
<dbReference type="EMBL" id="AC004392">
    <property type="protein sequence ID" value="AAC28510.1"/>
    <property type="status" value="ALT_SEQ"/>
    <property type="molecule type" value="Genomic_DNA"/>
</dbReference>
<dbReference type="EMBL" id="CP002684">
    <property type="protein sequence ID" value="AEE33906.1"/>
    <property type="molecule type" value="Genomic_DNA"/>
</dbReference>
<dbReference type="EMBL" id="DQ446385">
    <property type="protein sequence ID" value="ABE65733.1"/>
    <property type="molecule type" value="mRNA"/>
</dbReference>
<dbReference type="PIR" id="T02139">
    <property type="entry name" value="T02139"/>
</dbReference>
<dbReference type="RefSeq" id="NP_176386.2">
    <property type="nucleotide sequence ID" value="NM_104875.3"/>
</dbReference>
<dbReference type="SMR" id="Q1PFH8"/>
<dbReference type="FunCoup" id="Q1PFH8">
    <property type="interactions" value="919"/>
</dbReference>
<dbReference type="STRING" id="3702.Q1PFH8"/>
<dbReference type="iPTMnet" id="Q1PFH8"/>
<dbReference type="PaxDb" id="3702-AT1G61950.1"/>
<dbReference type="EnsemblPlants" id="AT1G61950.1">
    <property type="protein sequence ID" value="AT1G61950.1"/>
    <property type="gene ID" value="AT1G61950"/>
</dbReference>
<dbReference type="GeneID" id="842490"/>
<dbReference type="Gramene" id="AT1G61950.1">
    <property type="protein sequence ID" value="AT1G61950.1"/>
    <property type="gene ID" value="AT1G61950"/>
</dbReference>
<dbReference type="KEGG" id="ath:AT1G61950"/>
<dbReference type="Araport" id="AT1G61950"/>
<dbReference type="TAIR" id="AT1G61950">
    <property type="gene designation" value="CPK19"/>
</dbReference>
<dbReference type="eggNOG" id="KOG0032">
    <property type="taxonomic scope" value="Eukaryota"/>
</dbReference>
<dbReference type="HOGENOM" id="CLU_000288_37_4_1"/>
<dbReference type="InParanoid" id="Q1PFH8"/>
<dbReference type="OMA" id="CLCINLK"/>
<dbReference type="PhylomeDB" id="Q1PFH8"/>
<dbReference type="PRO" id="PR:Q1PFH8"/>
<dbReference type="Proteomes" id="UP000006548">
    <property type="component" value="Chromosome 1"/>
</dbReference>
<dbReference type="ExpressionAtlas" id="Q1PFH8">
    <property type="expression patterns" value="baseline and differential"/>
</dbReference>
<dbReference type="GO" id="GO:0016020">
    <property type="term" value="C:membrane"/>
    <property type="evidence" value="ECO:0007669"/>
    <property type="project" value="UniProtKB-SubCell"/>
</dbReference>
<dbReference type="GO" id="GO:0005524">
    <property type="term" value="F:ATP binding"/>
    <property type="evidence" value="ECO:0007669"/>
    <property type="project" value="UniProtKB-KW"/>
</dbReference>
<dbReference type="GO" id="GO:0005509">
    <property type="term" value="F:calcium ion binding"/>
    <property type="evidence" value="ECO:0007669"/>
    <property type="project" value="InterPro"/>
</dbReference>
<dbReference type="GO" id="GO:0106310">
    <property type="term" value="F:protein serine kinase activity"/>
    <property type="evidence" value="ECO:0007669"/>
    <property type="project" value="RHEA"/>
</dbReference>
<dbReference type="GO" id="GO:0004674">
    <property type="term" value="F:protein serine/threonine kinase activity"/>
    <property type="evidence" value="ECO:0007669"/>
    <property type="project" value="UniProtKB-KW"/>
</dbReference>
<dbReference type="CDD" id="cd00051">
    <property type="entry name" value="EFh"/>
    <property type="match status" value="2"/>
</dbReference>
<dbReference type="CDD" id="cd05117">
    <property type="entry name" value="STKc_CAMK"/>
    <property type="match status" value="1"/>
</dbReference>
<dbReference type="FunFam" id="1.10.238.10:FF:000015">
    <property type="entry name" value="Calcium-dependent protein kinase 1"/>
    <property type="match status" value="1"/>
</dbReference>
<dbReference type="FunFam" id="3.30.200.20:FF:000004">
    <property type="entry name" value="Calcium-dependent protein kinase 1"/>
    <property type="match status" value="1"/>
</dbReference>
<dbReference type="FunFam" id="1.10.510.10:FF:000056">
    <property type="entry name" value="calcium-dependent protein kinase 1"/>
    <property type="match status" value="1"/>
</dbReference>
<dbReference type="Gene3D" id="1.10.238.10">
    <property type="entry name" value="EF-hand"/>
    <property type="match status" value="1"/>
</dbReference>
<dbReference type="Gene3D" id="3.30.200.20">
    <property type="entry name" value="Phosphorylase Kinase, domain 1"/>
    <property type="match status" value="1"/>
</dbReference>
<dbReference type="Gene3D" id="1.10.510.10">
    <property type="entry name" value="Transferase(Phosphotransferase) domain 1"/>
    <property type="match status" value="1"/>
</dbReference>
<dbReference type="InterPro" id="IPR050205">
    <property type="entry name" value="CDPK_Ser/Thr_kinases"/>
</dbReference>
<dbReference type="InterPro" id="IPR011992">
    <property type="entry name" value="EF-hand-dom_pair"/>
</dbReference>
<dbReference type="InterPro" id="IPR018247">
    <property type="entry name" value="EF_Hand_1_Ca_BS"/>
</dbReference>
<dbReference type="InterPro" id="IPR002048">
    <property type="entry name" value="EF_hand_dom"/>
</dbReference>
<dbReference type="InterPro" id="IPR011009">
    <property type="entry name" value="Kinase-like_dom_sf"/>
</dbReference>
<dbReference type="InterPro" id="IPR000719">
    <property type="entry name" value="Prot_kinase_dom"/>
</dbReference>
<dbReference type="InterPro" id="IPR017441">
    <property type="entry name" value="Protein_kinase_ATP_BS"/>
</dbReference>
<dbReference type="InterPro" id="IPR008271">
    <property type="entry name" value="Ser/Thr_kinase_AS"/>
</dbReference>
<dbReference type="PANTHER" id="PTHR24349">
    <property type="entry name" value="SERINE/THREONINE-PROTEIN KINASE"/>
    <property type="match status" value="1"/>
</dbReference>
<dbReference type="Pfam" id="PF13499">
    <property type="entry name" value="EF-hand_7"/>
    <property type="match status" value="2"/>
</dbReference>
<dbReference type="Pfam" id="PF00069">
    <property type="entry name" value="Pkinase"/>
    <property type="match status" value="1"/>
</dbReference>
<dbReference type="SMART" id="SM00054">
    <property type="entry name" value="EFh"/>
    <property type="match status" value="4"/>
</dbReference>
<dbReference type="SMART" id="SM00220">
    <property type="entry name" value="S_TKc"/>
    <property type="match status" value="1"/>
</dbReference>
<dbReference type="SUPFAM" id="SSF47473">
    <property type="entry name" value="EF-hand"/>
    <property type="match status" value="1"/>
</dbReference>
<dbReference type="SUPFAM" id="SSF56112">
    <property type="entry name" value="Protein kinase-like (PK-like)"/>
    <property type="match status" value="1"/>
</dbReference>
<dbReference type="PROSITE" id="PS00018">
    <property type="entry name" value="EF_HAND_1"/>
    <property type="match status" value="4"/>
</dbReference>
<dbReference type="PROSITE" id="PS50222">
    <property type="entry name" value="EF_HAND_2"/>
    <property type="match status" value="4"/>
</dbReference>
<dbReference type="PROSITE" id="PS00107">
    <property type="entry name" value="PROTEIN_KINASE_ATP"/>
    <property type="match status" value="1"/>
</dbReference>
<dbReference type="PROSITE" id="PS50011">
    <property type="entry name" value="PROTEIN_KINASE_DOM"/>
    <property type="match status" value="1"/>
</dbReference>
<dbReference type="PROSITE" id="PS00108">
    <property type="entry name" value="PROTEIN_KINASE_ST"/>
    <property type="match status" value="1"/>
</dbReference>
<proteinExistence type="evidence at transcript level"/>
<protein>
    <recommendedName>
        <fullName>Calcium-dependent protein kinase 19</fullName>
        <ecNumber>2.7.11.1</ecNumber>
    </recommendedName>
</protein>
<evidence type="ECO:0000250" key="1"/>
<evidence type="ECO:0000250" key="2">
    <source>
        <dbReference type="UniProtKB" id="Q9FKW4"/>
    </source>
</evidence>
<evidence type="ECO:0000255" key="3"/>
<evidence type="ECO:0000255" key="4">
    <source>
        <dbReference type="PROSITE-ProRule" id="PRU00159"/>
    </source>
</evidence>
<evidence type="ECO:0000255" key="5">
    <source>
        <dbReference type="PROSITE-ProRule" id="PRU00448"/>
    </source>
</evidence>
<evidence type="ECO:0000255" key="6">
    <source>
        <dbReference type="PROSITE-ProRule" id="PRU10027"/>
    </source>
</evidence>
<evidence type="ECO:0000256" key="7">
    <source>
        <dbReference type="SAM" id="MobiDB-lite"/>
    </source>
</evidence>
<evidence type="ECO:0000305" key="8"/>
<keyword id="KW-0067">ATP-binding</keyword>
<keyword id="KW-0106">Calcium</keyword>
<keyword id="KW-0418">Kinase</keyword>
<keyword id="KW-0449">Lipoprotein</keyword>
<keyword id="KW-0472">Membrane</keyword>
<keyword id="KW-0479">Metal-binding</keyword>
<keyword id="KW-0519">Myristate</keyword>
<keyword id="KW-0547">Nucleotide-binding</keyword>
<keyword id="KW-0597">Phosphoprotein</keyword>
<keyword id="KW-1185">Reference proteome</keyword>
<keyword id="KW-0677">Repeat</keyword>
<keyword id="KW-0723">Serine/threonine-protein kinase</keyword>
<keyword id="KW-0808">Transferase</keyword>
<feature type="initiator methionine" description="Removed" evidence="3">
    <location>
        <position position="1"/>
    </location>
</feature>
<feature type="chain" id="PRO_0000363341" description="Calcium-dependent protein kinase 19">
    <location>
        <begin position="2"/>
        <end position="551"/>
    </location>
</feature>
<feature type="domain" description="Protein kinase" evidence="4">
    <location>
        <begin position="98"/>
        <end position="357"/>
    </location>
</feature>
<feature type="domain" description="EF-hand 1" evidence="5">
    <location>
        <begin position="400"/>
        <end position="435"/>
    </location>
</feature>
<feature type="domain" description="EF-hand 2" evidence="5">
    <location>
        <begin position="436"/>
        <end position="471"/>
    </location>
</feature>
<feature type="domain" description="EF-hand 3" evidence="5">
    <location>
        <begin position="472"/>
        <end position="507"/>
    </location>
</feature>
<feature type="domain" description="EF-hand 4" evidence="5">
    <location>
        <begin position="512"/>
        <end position="542"/>
    </location>
</feature>
<feature type="region of interest" description="Disordered" evidence="7">
    <location>
        <begin position="12"/>
        <end position="46"/>
    </location>
</feature>
<feature type="region of interest" description="Autoinhibitory domain" evidence="1">
    <location>
        <begin position="363"/>
        <end position="393"/>
    </location>
</feature>
<feature type="compositionally biased region" description="Basic and acidic residues" evidence="7">
    <location>
        <begin position="25"/>
        <end position="39"/>
    </location>
</feature>
<feature type="active site" description="Proton acceptor" evidence="4 6">
    <location>
        <position position="222"/>
    </location>
</feature>
<feature type="binding site" evidence="4">
    <location>
        <begin position="104"/>
        <end position="112"/>
    </location>
    <ligand>
        <name>ATP</name>
        <dbReference type="ChEBI" id="CHEBI:30616"/>
    </ligand>
</feature>
<feature type="binding site" evidence="4">
    <location>
        <position position="127"/>
    </location>
    <ligand>
        <name>ATP</name>
        <dbReference type="ChEBI" id="CHEBI:30616"/>
    </ligand>
</feature>
<feature type="binding site" evidence="5">
    <location>
        <position position="413"/>
    </location>
    <ligand>
        <name>Ca(2+)</name>
        <dbReference type="ChEBI" id="CHEBI:29108"/>
        <label>1</label>
    </ligand>
</feature>
<feature type="binding site" evidence="5">
    <location>
        <position position="415"/>
    </location>
    <ligand>
        <name>Ca(2+)</name>
        <dbReference type="ChEBI" id="CHEBI:29108"/>
        <label>1</label>
    </ligand>
</feature>
<feature type="binding site" evidence="5">
    <location>
        <position position="417"/>
    </location>
    <ligand>
        <name>Ca(2+)</name>
        <dbReference type="ChEBI" id="CHEBI:29108"/>
        <label>1</label>
    </ligand>
</feature>
<feature type="binding site" evidence="5">
    <location>
        <position position="419"/>
    </location>
    <ligand>
        <name>Ca(2+)</name>
        <dbReference type="ChEBI" id="CHEBI:29108"/>
        <label>1</label>
    </ligand>
</feature>
<feature type="binding site" evidence="5">
    <location>
        <position position="424"/>
    </location>
    <ligand>
        <name>Ca(2+)</name>
        <dbReference type="ChEBI" id="CHEBI:29108"/>
        <label>1</label>
    </ligand>
</feature>
<feature type="binding site" evidence="5">
    <location>
        <position position="449"/>
    </location>
    <ligand>
        <name>Ca(2+)</name>
        <dbReference type="ChEBI" id="CHEBI:29108"/>
        <label>2</label>
    </ligand>
</feature>
<feature type="binding site" evidence="5">
    <location>
        <position position="451"/>
    </location>
    <ligand>
        <name>Ca(2+)</name>
        <dbReference type="ChEBI" id="CHEBI:29108"/>
        <label>2</label>
    </ligand>
</feature>
<feature type="binding site" evidence="5">
    <location>
        <position position="453"/>
    </location>
    <ligand>
        <name>Ca(2+)</name>
        <dbReference type="ChEBI" id="CHEBI:29108"/>
        <label>2</label>
    </ligand>
</feature>
<feature type="binding site" evidence="5">
    <location>
        <position position="455"/>
    </location>
    <ligand>
        <name>Ca(2+)</name>
        <dbReference type="ChEBI" id="CHEBI:29108"/>
        <label>2</label>
    </ligand>
</feature>
<feature type="binding site" evidence="5">
    <location>
        <position position="460"/>
    </location>
    <ligand>
        <name>Ca(2+)</name>
        <dbReference type="ChEBI" id="CHEBI:29108"/>
        <label>2</label>
    </ligand>
</feature>
<feature type="binding site" evidence="5">
    <location>
        <position position="485"/>
    </location>
    <ligand>
        <name>Ca(2+)</name>
        <dbReference type="ChEBI" id="CHEBI:29108"/>
        <label>3</label>
    </ligand>
</feature>
<feature type="binding site" evidence="5">
    <location>
        <position position="487"/>
    </location>
    <ligand>
        <name>Ca(2+)</name>
        <dbReference type="ChEBI" id="CHEBI:29108"/>
        <label>3</label>
    </ligand>
</feature>
<feature type="binding site" evidence="5">
    <location>
        <position position="489"/>
    </location>
    <ligand>
        <name>Ca(2+)</name>
        <dbReference type="ChEBI" id="CHEBI:29108"/>
        <label>3</label>
    </ligand>
</feature>
<feature type="binding site" evidence="5">
    <location>
        <position position="496"/>
    </location>
    <ligand>
        <name>Ca(2+)</name>
        <dbReference type="ChEBI" id="CHEBI:29108"/>
        <label>3</label>
    </ligand>
</feature>
<feature type="binding site" evidence="5">
    <location>
        <position position="520"/>
    </location>
    <ligand>
        <name>Ca(2+)</name>
        <dbReference type="ChEBI" id="CHEBI:29108"/>
        <label>4</label>
    </ligand>
</feature>
<feature type="binding site" evidence="5">
    <location>
        <position position="522"/>
    </location>
    <ligand>
        <name>Ca(2+)</name>
        <dbReference type="ChEBI" id="CHEBI:29108"/>
        <label>4</label>
    </ligand>
</feature>
<feature type="binding site" evidence="5">
    <location>
        <position position="524"/>
    </location>
    <ligand>
        <name>Ca(2+)</name>
        <dbReference type="ChEBI" id="CHEBI:29108"/>
        <label>4</label>
    </ligand>
</feature>
<feature type="binding site" evidence="5">
    <location>
        <position position="526"/>
    </location>
    <ligand>
        <name>Ca(2+)</name>
        <dbReference type="ChEBI" id="CHEBI:29108"/>
        <label>4</label>
    </ligand>
</feature>
<feature type="binding site" evidence="5">
    <location>
        <position position="531"/>
    </location>
    <ligand>
        <name>Ca(2+)</name>
        <dbReference type="ChEBI" id="CHEBI:29108"/>
        <label>4</label>
    </ligand>
</feature>
<feature type="modified residue" description="Phosphoserine" evidence="2">
    <location>
        <position position="263"/>
    </location>
</feature>
<feature type="lipid moiety-binding region" description="N-myristoyl glycine" evidence="3">
    <location>
        <position position="2"/>
    </location>
</feature>